<organismHost>
    <name type="scientific">Homo sapiens</name>
    <name type="common">Human</name>
    <dbReference type="NCBI Taxonomy" id="9606"/>
</organismHost>
<reference key="1">
    <citation type="journal article" date="1993" name="Virus Res.">
        <title>The sequence of hepatitis E virus isolated directly from a single source during an outbreak in China.</title>
        <authorList>
            <person name="Bi S.L."/>
            <person name="Purdy M.A."/>
            <person name="McCaustland K.A."/>
            <person name="Margolis H.S."/>
            <person name="Bradley D.W."/>
        </authorList>
    </citation>
    <scope>NUCLEOTIDE SEQUENCE [GENOMIC RNA]</scope>
</reference>
<reference key="2">
    <citation type="journal article" date="1992" name="Proc. Natl. Acad. Sci. U.S.A.">
        <title>Computer-assisted assignment of functional domains in the nonstructural polyprotein of hepatitis E virus: delineation of an additional group of positive-strand RNA plant and animal viruses.</title>
        <authorList>
            <person name="Koonin E.V."/>
            <person name="Gorbalenya A.E."/>
            <person name="Purdy M.A."/>
            <person name="Rozanov M.N."/>
            <person name="Reyes G.R."/>
            <person name="Bradley D.W."/>
        </authorList>
    </citation>
    <scope>DOMAIN</scope>
</reference>
<reference key="3">
    <citation type="journal article" date="2010" name="J. Virol.">
        <title>RNA 5'-triphosphatase activity of the hepatitis E virus helicase domain.</title>
        <authorList>
            <person name="Karpe Y.A."/>
            <person name="Lole K.S."/>
        </authorList>
    </citation>
    <scope>FUNCTION (NTPASE/HELICASE)</scope>
</reference>
<reference key="4">
    <citation type="journal article" date="2012" name="J. Virol.">
        <title>Evolution of the hepatitis E virus polyproline region: order from disorder.</title>
        <authorList>
            <person name="Purdy M.A."/>
        </authorList>
    </citation>
    <scope>DOMAIN</scope>
</reference>
<reference key="5">
    <citation type="journal article" date="2013" name="Virus Res.">
        <title>Molecular characterization of hepatitis E virus ORF1 gene supports a papain-like cysteine protease (PCP)-domain activity.</title>
        <authorList>
            <person name="Parvez M.K."/>
        </authorList>
    </citation>
    <scope>MUTAGENESIS OF HIS-443; CYS-457; CYS-459; CYS-471; CYS-472; CYS-481; CYS-483; HIS-497; HIS-590; GLY-816 AND GLY-817</scope>
    <scope>PROTEOLYTIC CLEAVAGE</scope>
</reference>
<reference key="6">
    <citation type="journal article" date="2014" name="Virus Res.">
        <title>Analysis of helicase domain mutations in the hepatitis E virus derived from patients with fulminant hepatic failure: effects on enzymatic activities and virus replication.</title>
        <authorList>
            <person name="Devhare P."/>
            <person name="Sharma K."/>
            <person name="Mhaindarkar V."/>
            <person name="Arankalle V."/>
            <person name="Lole K."/>
        </authorList>
    </citation>
    <scope>FUNCTION (NTPASE/HELICASE)</scope>
    <scope>MUTAGENESIS OF LEU-1110 AND VAL-1120</scope>
    <scope>CATALYTIC ACTIVITY (NTPASE/HELICASE)</scope>
</reference>
<reference key="7">
    <citation type="journal article" date="2014" name="J. Gen. Virol.">
        <title>Hepatitis E virus (HEV) protease: a chymotrypsin-like enzyme that processes both non-structural (pORF1) and capsid (pORF2) protein.</title>
        <authorList>
            <person name="Paliwal D."/>
            <person name="Panda S.K."/>
            <person name="Kapur N."/>
            <person name="Varma S.P."/>
            <person name="Durgapal H."/>
        </authorList>
    </citation>
    <scope>FUNCTION (PROTEASE)</scope>
    <scope>MUTAGENESIS OF HIS-443; CYS-472; CYS-481 AND CYS-483</scope>
    <scope>PROTEOLYTIC CLEAVAGE</scope>
    <scope>CATALYTIC ACTIVITY (PUTATIVE PROTEASE)</scope>
    <scope>ACTIVITY REGULATION (PUTATIVE PROTEASE)</scope>
</reference>
<reference key="8">
    <citation type="journal article" date="2016" name="J. Gen. Virol.">
        <title>Hepatitis E virus RNA-dependent RNA polymerase: RNA template specificities, recruitment and synthesis.</title>
        <authorList>
            <person name="Mahilkar S."/>
            <person name="Paingankar M.S."/>
            <person name="Lole K.S."/>
        </authorList>
    </citation>
    <scope>FUNCTION (RNA-DIRECTED RNA POLYMERASE)</scope>
    <scope>MUTAGENESIS OF 1551-ASN--ASN-1552</scope>
</reference>
<reference key="9">
    <citation type="journal article" date="2017" name="World J. Gastroenterol.">
        <title>Mutational analysis of hepatitis E virus ORF1 'Y-domain': Effects on RNA replication and virion infectivity.</title>
        <authorList>
            <person name="Parvez M.K."/>
        </authorList>
    </citation>
    <scope>MUTAGENESIS OF CYS-336; CYS-337 AND TRP-413</scope>
    <scope>FUNCTION (Y-DOMAIN)</scope>
</reference>
<reference key="10">
    <citation type="journal article" date="2018" name="Cell. Microbiol.">
        <title>Identification of GBF1 as a cellular factor required for hepatitis E virus RNA replication.</title>
        <authorList>
            <person name="Farhat R."/>
            <person name="Ankavay M."/>
            <person name="Lebsir N."/>
            <person name="Gouttenoire J."/>
            <person name="Jackson C.L."/>
            <person name="Wychowski C."/>
            <person name="Moradpour D."/>
            <person name="Dubuisson J."/>
            <person name="Rouille Y."/>
            <person name="Cocquerel L."/>
        </authorList>
    </citation>
    <scope>SUBCELLULAR LOCATION</scope>
</reference>
<reference key="11">
    <citation type="journal article" date="2018" name="J. Microbiol. Biotechnol.">
        <title>Hepatitis E Virus Papain-Like Cysteine Protease Inhibits Type I Interferon Induction by Down-Regulating Melanoma Differentiation-Associated Gene 5.</title>
        <authorList>
            <person name="Kim E."/>
            <person name="Myoung J."/>
        </authorList>
    </citation>
    <scope>FUNCTION (PUTATIVE PROTEASE)</scope>
</reference>
<reference key="12">
    <citation type="journal article" date="2018" name="J. Virol.">
        <title>Activities of Thrombin and Factor Xa Are Essential for Replication of Hepatitis E Virus and Are Possibly Implicated in ORF1 Polyprotein Processing.</title>
        <authorList>
            <person name="Kanade G.D."/>
            <person name="Pingale K.D."/>
            <person name="Karpe Y.A."/>
        </authorList>
    </citation>
    <scope>PROTEOLYTIC CLEAVAGE</scope>
</reference>
<reference key="13">
    <citation type="journal article" date="2019" name="Front. Cell. Infect. Microbiol.">
        <title>Hepatitis E Virus Cysteine Protease Has Papain Like Properties Validated by in silico Modeling and Cell-Free Inhibition Assays.</title>
        <authorList>
            <person name="Saraswat S."/>
            <person name="Chaudhary M."/>
            <person name="Sehgal D."/>
        </authorList>
    </citation>
    <scope>CATALYTIC ACTIVITY (PUTATIVE PROTEASE)</scope>
    <scope>PROTEOLYTIC CLEAVAGE</scope>
    <scope>BIOPHYSICOCHEMICAL PROPERTIES (PUTATIVE PROTEASE)</scope>
    <scope>ACTIVITY REGULATION (PUTATIVE PROTEASE)</scope>
    <scope>DISULFIDE BOND</scope>
</reference>
<reference key="14">
    <citation type="journal article" date="2022" name="Molecules">
        <title>Biochemical and Biophysical Characterisation of the Hepatitis E Virus Guanine-7-Methyltransferase.</title>
        <authorList>
            <person name="Hooda P."/>
            <person name="Ishtikhar M."/>
            <person name="Saraswat S."/>
            <person name="Bhatia P."/>
            <person name="Mishra D."/>
            <person name="Trivedi A."/>
            <person name="Kulandaisamy R."/>
            <person name="Aggarwal S."/>
            <person name="Munde M."/>
            <person name="Ali N."/>
            <person name="AlAsmari A.F."/>
            <person name="Rauf M.A."/>
            <person name="Inampudi K.K."/>
            <person name="Sehgal D."/>
        </authorList>
    </citation>
    <scope>FUNCTION (METHYLTRANSFERASE)</scope>
    <scope>BIOPHYSICOCHEMICAL PROPERTIES (METHYLTRANSFERASE)</scope>
    <scope>CATALYTIC ACTIVITY (METHYLTRANSFERASE)</scope>
    <scope>COFACTOR (METHYLTRANSFERASE)</scope>
</reference>
<reference key="15">
    <citation type="journal article" date="2022" name="Front. Microbiol.">
        <title>Processing and Subcellular Localization of the Hepatitis E Virus Replicase: Identification of Candidate Viral Factories.</title>
        <authorList>
            <person name="Metzger K."/>
            <person name="Bentaleb C."/>
            <person name="Hervouet K."/>
            <person name="Alexandre V."/>
            <person name="Montpellier C."/>
            <person name="Saliou J.M."/>
            <person name="Ferrie M."/>
            <person name="Camuzet C."/>
            <person name="Rouille Y."/>
            <person name="Lecoeur C."/>
            <person name="Dubuisson J."/>
            <person name="Cocquerel L."/>
            <person name="Aliouat-Denis C.M."/>
        </authorList>
    </citation>
    <scope>SUBCELLULAR LOCATION</scope>
</reference>
<reference key="16">
    <citation type="journal article" date="2023" name="Elife">
        <title>Structural features stabilized by divalent cation coordination within hepatitis E virus ORF1 are critical for viral replication.</title>
        <authorList>
            <person name="LeDesma R."/>
            <person name="Heller B."/>
            <person name="Biswas A."/>
            <person name="Maya S."/>
            <person name="Gili S."/>
            <person name="Higgins J."/>
            <person name="Ploss A."/>
        </authorList>
    </citation>
    <scope>CHARACTERIZATION (PUTATIVE PROTEASE)</scope>
</reference>
<reference key="17">
    <citation type="journal article" date="2023" name="PLoS Pathog.">
        <title>Thrombin cleavage of the hepatitis E virus polyprotein at multiple conserved locations is required for genome replication.</title>
        <authorList>
            <person name="Pierce D.M."/>
            <person name="Buchanan F.J.T."/>
            <person name="Macrae F.L."/>
            <person name="Mills J.T."/>
            <person name="Cox A."/>
            <person name="Abualsaoud K.M."/>
            <person name="Ward J.C."/>
            <person name="Ariens R.A.S."/>
            <person name="Harris M."/>
            <person name="Stonehouse N.J."/>
            <person name="Herod M.R."/>
        </authorList>
    </citation>
    <scope>PROTEOLYTIC CLEAVAGE (NON-STRUCTURAL POLYPROTEIN PORF1)</scope>
</reference>
<keyword id="KW-0067">ATP-binding</keyword>
<keyword id="KW-1015">Disulfide bond</keyword>
<keyword id="KW-0347">Helicase</keyword>
<keyword id="KW-1035">Host cytoplasm</keyword>
<keyword id="KW-0945">Host-virus interaction</keyword>
<keyword id="KW-0378">Hydrolase</keyword>
<keyword id="KW-1090">Inhibition of host innate immune response by virus</keyword>
<keyword id="KW-1092">Inhibition of host IRF3 by virus</keyword>
<keyword id="KW-1089">Inhibition of host MDA5 by virus</keyword>
<keyword id="KW-1088">Inhibition of host RIG-I by virus</keyword>
<keyword id="KW-1113">Inhibition of host RLR pathway by virus</keyword>
<keyword id="KW-1223">Inhibition of host TBK1 by virus</keyword>
<keyword id="KW-1225">Inhibition of host TLR pathway by virus</keyword>
<keyword id="KW-0460">Magnesium</keyword>
<keyword id="KW-0479">Metal-binding</keyword>
<keyword id="KW-0489">Methyltransferase</keyword>
<keyword id="KW-0547">Nucleotide-binding</keyword>
<keyword id="KW-0548">Nucleotidyltransferase</keyword>
<keyword id="KW-0645">Protease</keyword>
<keyword id="KW-1185">Reference proteome</keyword>
<keyword id="KW-0694">RNA-binding</keyword>
<keyword id="KW-0696">RNA-directed RNA polymerase</keyword>
<keyword id="KW-0788">Thiol protease</keyword>
<keyword id="KW-0808">Transferase</keyword>
<keyword id="KW-0899">Viral immunoevasion</keyword>
<keyword id="KW-0693">Viral RNA replication</keyword>
<keyword id="KW-0862">Zinc</keyword>
<comment type="function">
    <text evidence="23 30">Methyltransferase: Displays a capping enzyme activity (PubMed:35268608). This function is necessary since all viral RNAs are synthesized in the cytoplasm, and host capping enzymes are restricted to the nucleus (Probable). The enzymatic reaction involves a covalent link between 7-methyl-GMP and the methyltransferase, whereas eukaryotic capping enzymes form a covalent complex only with GMP (Probable). Methyltransferase catalyzes transfer of a methyl group from S-adenosylmethionine to GTP and GDP to yield m(7)GTP or m(7)GDP (Probable). GDP is a better substrate than GTP (PubMed:35268608). This enzyme also displays guanylyltransferase activity to form a covalent complex, methyltransferase-m(7)GMP, from which 7-methyl-GMP is transferred to the mRNA to create the cap structure (Probable).</text>
</comment>
<comment type="function">
    <text evidence="18">Y-domain: Indispensable for virus replication.</text>
</comment>
<comment type="function">
    <text evidence="16 21 22 27 31">Putative protease: The putative protease domain, although necessary for replication of the virus, may not be a protease but rather a structural Zn(2+)-binding domain (Probable) (PubMed:24795447, PubMed:32039053, PubMed:37478143). Inhibits induction of IFN-beta by MDA5 and RIG-I pathways and down-regulates the expression of MDA5 (PubMed:30304915).</text>
</comment>
<comment type="function">
    <text evidence="2 12 15">NTPase/helicase: Multi-functional protein that exhibits NTPase and RNA unwinding activities (By similarity). Hydrolyzes all NTPs efficiently and unwinds RNA duplexes containing 5' overhangs (By similarity). Possesses a sequence independent RNA-5'-triphosphatase (RTPase) activity suggestive of its role in forming viral cap structure (PubMed:20592074). Also participates in viral genome replication, RNA translocation and genome packaging/unpackaging (PubMed:24630891).</text>
</comment>
<comment type="function">
    <text evidence="5 17">RNA-directed RNA polymerase: Plays an essential role in the virus replication (PubMed:27324050). Binds to the 3'-end of the genomic RNA to initiate viral replication (By similarity).</text>
</comment>
<comment type="catalytic activity">
    <reaction evidence="23">
        <text>GTP + S-adenosyl-L-methionine = N(7)-methyl-GTP + S-adenosyl-L-homocysteine</text>
        <dbReference type="Rhea" id="RHEA:46948"/>
        <dbReference type="ChEBI" id="CHEBI:37565"/>
        <dbReference type="ChEBI" id="CHEBI:57856"/>
        <dbReference type="ChEBI" id="CHEBI:59789"/>
        <dbReference type="ChEBI" id="CHEBI:87133"/>
    </reaction>
    <physiologicalReaction direction="left-to-right" evidence="26">
        <dbReference type="Rhea" id="RHEA:46949"/>
    </physiologicalReaction>
</comment>
<comment type="catalytic activity">
    <reaction evidence="8">
        <text>RNA(n) + a ribonucleoside 5'-triphosphate = RNA(n+1) + diphosphate</text>
        <dbReference type="Rhea" id="RHEA:21248"/>
        <dbReference type="Rhea" id="RHEA-COMP:14527"/>
        <dbReference type="Rhea" id="RHEA-COMP:17342"/>
        <dbReference type="ChEBI" id="CHEBI:33019"/>
        <dbReference type="ChEBI" id="CHEBI:61557"/>
        <dbReference type="ChEBI" id="CHEBI:140395"/>
        <dbReference type="EC" id="2.7.7.48"/>
    </reaction>
</comment>
<comment type="cofactor">
    <cofactor>
        <name>Mg(2+)</name>
        <dbReference type="ChEBI" id="CHEBI:18420"/>
    </cofactor>
    <text evidence="23">For methyltransferase activity.</text>
</comment>
<comment type="activity regulation">
    <text evidence="16 22">Putative protease: Inhibited by chymostatin.</text>
</comment>
<comment type="biophysicochemical properties">
    <kinetics>
        <KM evidence="23">0.387 mM for GTP</KM>
    </kinetics>
    <phDependence>
        <text evidence="22 23">Optimum pH is 8.0 for GTP (methyltransferase). Optimum pH is 4-7.8 for FTC-casein (putative protease).</text>
    </phDependence>
    <temperatureDependence>
        <text evidence="22 23">Optimum temperature is 37 degrees Celsius for GTP (methyltransferase). Optimum temperature is 37-48 degrees Celsius for FTC-casein (putative protease).</text>
    </temperatureDependence>
</comment>
<comment type="subunit">
    <text evidence="3">The protease domain interacts with host EIF2AK4 (via C-terminus); this interaction inhibits dimerization of EIF2AK4 and prevents EIF2AK4-mediated phosphorylation of host EIF2A.</text>
</comment>
<comment type="subcellular location">
    <subcellularLocation>
        <location evidence="19">Host cytoplasm</location>
    </subcellularLocation>
    <subcellularLocation>
        <location evidence="24">Host cytoplasm</location>
        <location evidence="24">Host perinuclear region</location>
    </subcellularLocation>
</comment>
<comment type="domain">
    <text evidence="3 11 13">Contains a methyltransferase domain, a Y-domain, a putative protease region, a zinc-binding region with similarity to calycins, a proline-rich disordered hypervariable region (HVR), a macro domain (also called X-domain), a helicase domain and an RNA-dependent RNA polymerase domain (PubMed:1518855, PubMed:22811526). Since the boundaries and the activity of the protease are not clearly defined, the zinc-binding region might be part of the protease (By similarity).</text>
</comment>
<comment type="PTM">
    <text evidence="14 16 20 22 24 25">ORF1 polyprotein does not seem to be processed into distinct enzymatic domains by a viral protease belonging to ORF1, but could be processed by a host serine protease like thrombin.</text>
</comment>
<comment type="similarity">
    <text evidence="26">Belongs to the hepevirus non-structural polyprotein family.</text>
</comment>
<comment type="sequence caution" evidence="26">
    <conflict type="frameshift">
        <sequence resource="EMBL-CDS" id="AAA96139"/>
    </conflict>
</comment>
<name>POLN_HEVCH</name>
<proteinExistence type="evidence at protein level"/>
<feature type="chain" id="PRO_0000402397" description="Non-structural polyprotein pORF1">
    <location>
        <begin position="1"/>
        <end position="1693"/>
    </location>
</feature>
<feature type="domain" description="Alphavirus-like MT" evidence="9">
    <location>
        <begin position="56"/>
        <end position="240"/>
    </location>
</feature>
<feature type="domain" description="Macro" evidence="7">
    <location>
        <begin position="775"/>
        <end position="921"/>
    </location>
</feature>
<feature type="domain" description="(+)RNA virus helicase ATP-binding">
    <location>
        <begin position="934"/>
        <end position="1082"/>
    </location>
</feature>
<feature type="domain" description="(+)RNA virus helicase C-terminal">
    <location>
        <begin position="1083"/>
        <end position="1216"/>
    </location>
</feature>
<feature type="domain" description="RdRp catalytic" evidence="8">
    <location>
        <begin position="1454"/>
        <end position="1565"/>
    </location>
</feature>
<feature type="region of interest" description="Y-domain" evidence="18">
    <location>
        <begin position="241"/>
        <end position="439"/>
    </location>
</feature>
<feature type="region of interest" description="Protease" evidence="3">
    <location>
        <begin position="442"/>
        <end position="509"/>
    </location>
</feature>
<feature type="region of interest" description="Zinc-binding" evidence="3">
    <location>
        <begin position="510"/>
        <end position="691"/>
    </location>
</feature>
<feature type="region of interest" description="Hinge" evidence="1">
    <location>
        <begin position="712"/>
        <end position="770"/>
    </location>
</feature>
<feature type="region of interest" description="Disordered" evidence="10">
    <location>
        <begin position="732"/>
        <end position="768"/>
    </location>
</feature>
<feature type="region of interest" description="NTPase/helicase" evidence="1">
    <location>
        <begin position="960"/>
        <end position="1204"/>
    </location>
</feature>
<feature type="region of interest" description="RNA-directed RNA polymerase" evidence="1">
    <location>
        <begin position="1207"/>
        <end position="1693"/>
    </location>
</feature>
<feature type="compositionally biased region" description="Pro residues" evidence="10">
    <location>
        <begin position="738"/>
        <end position="752"/>
    </location>
</feature>
<feature type="binding site" evidence="3">
    <location>
        <position position="671"/>
    </location>
    <ligand>
        <name>Zn(2+)</name>
        <dbReference type="ChEBI" id="CHEBI:29105"/>
    </ligand>
</feature>
<feature type="binding site" evidence="3">
    <location>
        <position position="673"/>
    </location>
    <ligand>
        <name>Zn(2+)</name>
        <dbReference type="ChEBI" id="CHEBI:29105"/>
    </ligand>
</feature>
<feature type="binding site" evidence="3">
    <location>
        <position position="686"/>
    </location>
    <ligand>
        <name>Zn(2+)</name>
        <dbReference type="ChEBI" id="CHEBI:29105"/>
    </ligand>
</feature>
<feature type="binding site" evidence="6">
    <location>
        <begin position="975"/>
        <end position="982"/>
    </location>
    <ligand>
        <name>ATP</name>
        <dbReference type="ChEBI" id="CHEBI:30616"/>
    </ligand>
</feature>
<feature type="disulfide bond" evidence="22">
    <location>
        <begin position="434"/>
        <end position="481"/>
    </location>
</feature>
<feature type="mutagenesis site" description="Complete loss of virus replication." evidence="18">
    <original>C</original>
    <variation>A</variation>
    <location>
        <position position="336"/>
    </location>
</feature>
<feature type="mutagenesis site" description="Complete loss of virus replication." evidence="18">
    <original>C</original>
    <variation>A</variation>
    <location>
        <position position="337"/>
    </location>
</feature>
<feature type="mutagenesis site" description="Complete loss of virus replication." evidence="18">
    <original>W</original>
    <variation>A</variation>
    <location>
        <position position="413"/>
    </location>
</feature>
<feature type="mutagenesis site" description="Complete loss of capsid protein ORF2 cleavage." evidence="16">
    <original>H</original>
    <variation>A</variation>
    <location>
        <position position="443"/>
    </location>
</feature>
<feature type="mutagenesis site" description="Lethal." evidence="14">
    <original>H</original>
    <variation>L</variation>
    <location>
        <position position="443"/>
    </location>
</feature>
<feature type="mutagenesis site" description="Lethal." evidence="14">
    <original>C</original>
    <variation>A</variation>
    <location>
        <position position="457"/>
    </location>
</feature>
<feature type="mutagenesis site" description="Lethal." evidence="14">
    <original>C</original>
    <variation>A</variation>
    <location>
        <position position="459"/>
    </location>
</feature>
<feature type="mutagenesis site" description="Lethal." evidence="14">
    <original>C</original>
    <variation>A</variation>
    <location>
        <position position="471"/>
    </location>
</feature>
<feature type="mutagenesis site" description="Complete loss of capsid protein ORF2 cleavage. Lethal." evidence="14 16">
    <original>C</original>
    <variation>A</variation>
    <location>
        <position position="472"/>
    </location>
</feature>
<feature type="mutagenesis site" description="Complete loss of capsid protein ORF2 cleavage. Lethal." evidence="14 16">
    <original>C</original>
    <variation>A</variation>
    <location>
        <position position="481"/>
    </location>
</feature>
<feature type="mutagenesis site" description="Complete loss of capsid protein ORF2 cleavage. Lethal." evidence="14 16">
    <original>C</original>
    <variation>A</variation>
    <location>
        <position position="483"/>
    </location>
</feature>
<feature type="mutagenesis site" description="Lethal." evidence="14">
    <original>H</original>
    <variation>L</variation>
    <location>
        <position position="497"/>
    </location>
</feature>
<feature type="mutagenesis site" description="Lethal." evidence="14">
    <original>H</original>
    <variation>L</variation>
    <location>
        <position position="590"/>
    </location>
</feature>
<feature type="mutagenesis site" description="Lethal." evidence="14">
    <original>G</original>
    <variation>V</variation>
    <location>
        <position position="816"/>
    </location>
</feature>
<feature type="mutagenesis site" description="About 20% loss of viral replication,." evidence="15">
    <original>L</original>
    <variation>F</variation>
    <location>
        <position position="1110"/>
    </location>
</feature>
<feature type="mutagenesis site" description="About 70% loss of viral replication." evidence="15">
    <original>V</original>
    <variation>I</variation>
    <location>
        <position position="1120"/>
    </location>
</feature>
<feature type="mutagenesis site" description="More than 95% loss of viral replication." evidence="17">
    <original>DD</original>
    <variation>AA</variation>
    <location>
        <begin position="1551"/>
        <end position="1552"/>
    </location>
</feature>
<protein>
    <recommendedName>
        <fullName>Non-structural polyprotein pORF1</fullName>
    </recommendedName>
    <domain>
        <recommendedName>
            <fullName>Methyltransferase</fullName>
            <ecNumber evidence="4">2.1.1.-</ecNumber>
            <ecNumber evidence="23">2.7.7.-</ecNumber>
        </recommendedName>
    </domain>
    <domain>
        <recommendedName>
            <fullName evidence="26">Putative protease</fullName>
            <ecNumber evidence="28 29">3.4.22.-</ecNumber>
        </recommendedName>
        <alternativeName>
            <fullName evidence="3">Putative papain-like cysteine protease</fullName>
            <shortName evidence="3">PCP</shortName>
        </alternativeName>
    </domain>
    <domain>
        <recommendedName>
            <fullName>NTPase/helicase</fullName>
            <ecNumber evidence="15">3.6.4.-</ecNumber>
        </recommendedName>
    </domain>
    <domain>
        <recommendedName>
            <fullName>RNA-directed RNA polymerase</fullName>
            <shortName>RdRp</shortName>
            <ecNumber>2.7.7.48</ecNumber>
        </recommendedName>
    </domain>
</protein>
<gene>
    <name type="ORF">ORF1</name>
</gene>
<evidence type="ECO:0000250" key="1"/>
<evidence type="ECO:0000250" key="2">
    <source>
        <dbReference type="UniProtKB" id="P29324"/>
    </source>
</evidence>
<evidence type="ECO:0000250" key="3">
    <source>
        <dbReference type="UniProtKB" id="P33424"/>
    </source>
</evidence>
<evidence type="ECO:0000250" key="4">
    <source>
        <dbReference type="UniProtKB" id="Q04610"/>
    </source>
</evidence>
<evidence type="ECO:0000250" key="5">
    <source>
        <dbReference type="UniProtKB" id="Q9WC28"/>
    </source>
</evidence>
<evidence type="ECO:0000255" key="6"/>
<evidence type="ECO:0000255" key="7">
    <source>
        <dbReference type="PROSITE-ProRule" id="PRU00490"/>
    </source>
</evidence>
<evidence type="ECO:0000255" key="8">
    <source>
        <dbReference type="PROSITE-ProRule" id="PRU00539"/>
    </source>
</evidence>
<evidence type="ECO:0000255" key="9">
    <source>
        <dbReference type="PROSITE-ProRule" id="PRU01079"/>
    </source>
</evidence>
<evidence type="ECO:0000256" key="10">
    <source>
        <dbReference type="SAM" id="MobiDB-lite"/>
    </source>
</evidence>
<evidence type="ECO:0000269" key="11">
    <source>
    </source>
</evidence>
<evidence type="ECO:0000269" key="12">
    <source>
    </source>
</evidence>
<evidence type="ECO:0000269" key="13">
    <source>
    </source>
</evidence>
<evidence type="ECO:0000269" key="14">
    <source>
    </source>
</evidence>
<evidence type="ECO:0000269" key="15">
    <source>
    </source>
</evidence>
<evidence type="ECO:0000269" key="16">
    <source>
    </source>
</evidence>
<evidence type="ECO:0000269" key="17">
    <source>
    </source>
</evidence>
<evidence type="ECO:0000269" key="18">
    <source>
    </source>
</evidence>
<evidence type="ECO:0000269" key="19">
    <source>
    </source>
</evidence>
<evidence type="ECO:0000269" key="20">
    <source>
    </source>
</evidence>
<evidence type="ECO:0000269" key="21">
    <source>
    </source>
</evidence>
<evidence type="ECO:0000269" key="22">
    <source>
    </source>
</evidence>
<evidence type="ECO:0000269" key="23">
    <source>
    </source>
</evidence>
<evidence type="ECO:0000269" key="24">
    <source>
    </source>
</evidence>
<evidence type="ECO:0000269" key="25">
    <source>
    </source>
</evidence>
<evidence type="ECO:0000305" key="26"/>
<evidence type="ECO:0000305" key="27">
    <source>
    </source>
</evidence>
<evidence type="ECO:0000305" key="28">
    <source>
    </source>
</evidence>
<evidence type="ECO:0000305" key="29">
    <source>
    </source>
</evidence>
<evidence type="ECO:0000305" key="30">
    <source>
    </source>
</evidence>
<evidence type="ECO:0000305" key="31">
    <source>
    </source>
</evidence>
<accession>Q81862</accession>
<accession>Q81344</accession>
<accession>Q81863</accession>
<accession>Q81864</accession>
<accession>Q81865</accession>
<accession>Q81866</accession>
<accession>Q81867</accession>
<accession>Q81868</accession>
<accession>Q81869</accession>
<dbReference type="EC" id="2.1.1.-" evidence="4"/>
<dbReference type="EC" id="2.7.7.-" evidence="23"/>
<dbReference type="EC" id="3.4.22.-" evidence="28 29"/>
<dbReference type="EC" id="3.6.4.-" evidence="15"/>
<dbReference type="EC" id="2.7.7.48"/>
<dbReference type="EMBL" id="M94177">
    <property type="protein sequence ID" value="AAA96139.1"/>
    <property type="status" value="ALT_FRAME"/>
    <property type="molecule type" value="Genomic_RNA"/>
</dbReference>
<dbReference type="EMBL" id="L08816">
    <property type="protein sequence ID" value="AAA03182.1"/>
    <property type="molecule type" value="Genomic_RNA"/>
</dbReference>
<dbReference type="EMBL" id="L08816">
    <property type="protein sequence ID" value="AAA03183.1"/>
    <property type="molecule type" value="Genomic_RNA"/>
</dbReference>
<dbReference type="EMBL" id="L08816">
    <property type="protein sequence ID" value="AAA03184.1"/>
    <property type="molecule type" value="Genomic_RNA"/>
</dbReference>
<dbReference type="EMBL" id="L08816">
    <property type="protein sequence ID" value="AAA03185.1"/>
    <property type="molecule type" value="Genomic_RNA"/>
</dbReference>
<dbReference type="EMBL" id="L08816">
    <property type="protein sequence ID" value="AAA03186.1"/>
    <property type="molecule type" value="Genomic_RNA"/>
</dbReference>
<dbReference type="EMBL" id="L08816">
    <property type="protein sequence ID" value="AAA03187.1"/>
    <property type="molecule type" value="Genomic_RNA"/>
</dbReference>
<dbReference type="EMBL" id="L08816">
    <property type="protein sequence ID" value="AAA03188.1"/>
    <property type="molecule type" value="Genomic_RNA"/>
</dbReference>
<dbReference type="EMBL" id="L08816">
    <property type="protein sequence ID" value="AAA03189.1"/>
    <property type="molecule type" value="Genomic_RNA"/>
</dbReference>
<dbReference type="RefSeq" id="NP_056779.1">
    <property type="nucleotide sequence ID" value="NC_001434.1"/>
</dbReference>
<dbReference type="SMR" id="Q81862"/>
<dbReference type="DNASU" id="1494415"/>
<dbReference type="KEGG" id="vg:1494415"/>
<dbReference type="SABIO-RK" id="Q81862"/>
<dbReference type="Proteomes" id="UP000006705">
    <property type="component" value="Segment"/>
</dbReference>
<dbReference type="Proteomes" id="UP000102625">
    <property type="component" value="Genome"/>
</dbReference>
<dbReference type="GO" id="GO:0044220">
    <property type="term" value="C:host cell perinuclear region of cytoplasm"/>
    <property type="evidence" value="ECO:0007669"/>
    <property type="project" value="UniProtKB-SubCell"/>
</dbReference>
<dbReference type="GO" id="GO:0005524">
    <property type="term" value="F:ATP binding"/>
    <property type="evidence" value="ECO:0007669"/>
    <property type="project" value="UniProtKB-KW"/>
</dbReference>
<dbReference type="GO" id="GO:0008234">
    <property type="term" value="F:cysteine-type peptidase activity"/>
    <property type="evidence" value="ECO:0007669"/>
    <property type="project" value="UniProtKB-KW"/>
</dbReference>
<dbReference type="GO" id="GO:0004386">
    <property type="term" value="F:helicase activity"/>
    <property type="evidence" value="ECO:0000315"/>
    <property type="project" value="UniProtKB"/>
</dbReference>
<dbReference type="GO" id="GO:0046872">
    <property type="term" value="F:metal ion binding"/>
    <property type="evidence" value="ECO:0007669"/>
    <property type="project" value="UniProtKB-KW"/>
</dbReference>
<dbReference type="GO" id="GO:0008168">
    <property type="term" value="F:methyltransferase activity"/>
    <property type="evidence" value="ECO:0000314"/>
    <property type="project" value="UniProtKB"/>
</dbReference>
<dbReference type="GO" id="GO:0008174">
    <property type="term" value="F:mRNA methyltransferase activity"/>
    <property type="evidence" value="ECO:0007669"/>
    <property type="project" value="InterPro"/>
</dbReference>
<dbReference type="GO" id="GO:0003723">
    <property type="term" value="F:RNA binding"/>
    <property type="evidence" value="ECO:0007669"/>
    <property type="project" value="UniProtKB-KW"/>
</dbReference>
<dbReference type="GO" id="GO:0003968">
    <property type="term" value="F:RNA-directed RNA polymerase activity"/>
    <property type="evidence" value="ECO:0000314"/>
    <property type="project" value="UniProtKB"/>
</dbReference>
<dbReference type="GO" id="GO:0006351">
    <property type="term" value="P:DNA-templated transcription"/>
    <property type="evidence" value="ECO:0007669"/>
    <property type="project" value="InterPro"/>
</dbReference>
<dbReference type="GO" id="GO:0032259">
    <property type="term" value="P:methylation"/>
    <property type="evidence" value="ECO:0007669"/>
    <property type="project" value="UniProtKB-KW"/>
</dbReference>
<dbReference type="GO" id="GO:0016556">
    <property type="term" value="P:mRNA modification"/>
    <property type="evidence" value="ECO:0007669"/>
    <property type="project" value="InterPro"/>
</dbReference>
<dbReference type="GO" id="GO:0006508">
    <property type="term" value="P:proteolysis"/>
    <property type="evidence" value="ECO:0007669"/>
    <property type="project" value="UniProtKB-KW"/>
</dbReference>
<dbReference type="GO" id="GO:0006396">
    <property type="term" value="P:RNA processing"/>
    <property type="evidence" value="ECO:0007669"/>
    <property type="project" value="InterPro"/>
</dbReference>
<dbReference type="GO" id="GO:0039548">
    <property type="term" value="P:symbiont-mediated suppression of host cytoplasmic pattern recognition receptor signaling pathway via inhibition of IRF3 activity"/>
    <property type="evidence" value="ECO:0007669"/>
    <property type="project" value="UniProtKB-KW"/>
</dbReference>
<dbReference type="GO" id="GO:0039554">
    <property type="term" value="P:symbiont-mediated suppression of host cytoplasmic pattern recognition receptor signaling pathway via inhibition of MDA-5 activity"/>
    <property type="evidence" value="ECO:0007669"/>
    <property type="project" value="UniProtKB-KW"/>
</dbReference>
<dbReference type="GO" id="GO:0039540">
    <property type="term" value="P:symbiont-mediated suppression of host cytoplasmic pattern recognition receptor signaling pathway via inhibition of RIG-I activity"/>
    <property type="evidence" value="ECO:0007669"/>
    <property type="project" value="UniProtKB-KW"/>
</dbReference>
<dbReference type="GO" id="GO:0039723">
    <property type="term" value="P:symbiont-mediated suppression of host cytoplasmic pattern recognition receptor signaling pathway via inhibition of TBK1 activity"/>
    <property type="evidence" value="ECO:0007669"/>
    <property type="project" value="UniProtKB-KW"/>
</dbReference>
<dbReference type="GO" id="GO:0039722">
    <property type="term" value="P:symbiont-mediated suppression of host toll-like receptor signaling pathway"/>
    <property type="evidence" value="ECO:0007669"/>
    <property type="project" value="UniProtKB-KW"/>
</dbReference>
<dbReference type="GO" id="GO:0019082">
    <property type="term" value="P:viral protein processing"/>
    <property type="evidence" value="ECO:0007669"/>
    <property type="project" value="InterPro"/>
</dbReference>
<dbReference type="GO" id="GO:0039694">
    <property type="term" value="P:viral RNA genome replication"/>
    <property type="evidence" value="ECO:0007669"/>
    <property type="project" value="InterPro"/>
</dbReference>
<dbReference type="CDD" id="cd23259">
    <property type="entry name" value="Hepeviridae_RdRp"/>
    <property type="match status" value="1"/>
</dbReference>
<dbReference type="CDD" id="cd21557">
    <property type="entry name" value="Macro_X_Nsp3-like"/>
    <property type="match status" value="1"/>
</dbReference>
<dbReference type="Gene3D" id="3.40.220.10">
    <property type="entry name" value="Leucine Aminopeptidase, subunit E, domain 1"/>
    <property type="match status" value="1"/>
</dbReference>
<dbReference type="Gene3D" id="3.40.50.300">
    <property type="entry name" value="P-loop containing nucleotide triphosphate hydrolases"/>
    <property type="match status" value="2"/>
</dbReference>
<dbReference type="InterPro" id="IPR027351">
    <property type="entry name" value="(+)RNA_virus_helicase_core_dom"/>
</dbReference>
<dbReference type="InterPro" id="IPR002588">
    <property type="entry name" value="Alphavirus-like_MT_dom"/>
</dbReference>
<dbReference type="InterPro" id="IPR043502">
    <property type="entry name" value="DNA/RNA_pol_sf"/>
</dbReference>
<dbReference type="InterPro" id="IPR008748">
    <property type="entry name" value="Hepatitis-E_Cys-pept"/>
</dbReference>
<dbReference type="InterPro" id="IPR022202">
    <property type="entry name" value="Hepatitis-E_hinge"/>
</dbReference>
<dbReference type="InterPro" id="IPR047307">
    <property type="entry name" value="Hepeviridae_RdRp"/>
</dbReference>
<dbReference type="InterPro" id="IPR002589">
    <property type="entry name" value="Macro_dom"/>
</dbReference>
<dbReference type="InterPro" id="IPR043472">
    <property type="entry name" value="Macro_dom-like"/>
</dbReference>
<dbReference type="InterPro" id="IPR044371">
    <property type="entry name" value="Macro_X_NSP3-like"/>
</dbReference>
<dbReference type="InterPro" id="IPR027417">
    <property type="entry name" value="P-loop_NTPase"/>
</dbReference>
<dbReference type="InterPro" id="IPR001788">
    <property type="entry name" value="RNA-dep_RNA_pol_alsuvir"/>
</dbReference>
<dbReference type="InterPro" id="IPR007094">
    <property type="entry name" value="RNA-dir_pol_PSvirus"/>
</dbReference>
<dbReference type="Pfam" id="PF12526">
    <property type="entry name" value="DUF3729"/>
    <property type="match status" value="1"/>
</dbReference>
<dbReference type="Pfam" id="PF01661">
    <property type="entry name" value="Macro"/>
    <property type="match status" value="1"/>
</dbReference>
<dbReference type="Pfam" id="PF05417">
    <property type="entry name" value="Peptidase_C41"/>
    <property type="match status" value="1"/>
</dbReference>
<dbReference type="Pfam" id="PF00978">
    <property type="entry name" value="RdRP_2"/>
    <property type="match status" value="1"/>
</dbReference>
<dbReference type="Pfam" id="PF01443">
    <property type="entry name" value="Viral_helicase1"/>
    <property type="match status" value="1"/>
</dbReference>
<dbReference type="Pfam" id="PF01660">
    <property type="entry name" value="Vmethyltransf"/>
    <property type="match status" value="1"/>
</dbReference>
<dbReference type="SMART" id="SM00506">
    <property type="entry name" value="A1pp"/>
    <property type="match status" value="1"/>
</dbReference>
<dbReference type="SUPFAM" id="SSF56672">
    <property type="entry name" value="DNA/RNA polymerases"/>
    <property type="match status" value="1"/>
</dbReference>
<dbReference type="SUPFAM" id="SSF52949">
    <property type="entry name" value="Macro domain-like"/>
    <property type="match status" value="1"/>
</dbReference>
<dbReference type="SUPFAM" id="SSF52540">
    <property type="entry name" value="P-loop containing nucleoside triphosphate hydrolases"/>
    <property type="match status" value="1"/>
</dbReference>
<dbReference type="PROSITE" id="PS51743">
    <property type="entry name" value="ALPHAVIRUS_MT"/>
    <property type="match status" value="1"/>
</dbReference>
<dbReference type="PROSITE" id="PS51154">
    <property type="entry name" value="MACRO"/>
    <property type="match status" value="1"/>
</dbReference>
<dbReference type="PROSITE" id="PS51657">
    <property type="entry name" value="PSRV_HELICASE"/>
    <property type="match status" value="1"/>
</dbReference>
<dbReference type="PROSITE" id="PS50507">
    <property type="entry name" value="RDRP_SSRNA_POS"/>
    <property type="match status" value="1"/>
</dbReference>
<organism>
    <name type="scientific">Hepatitis E virus genotype 1 (isolate Human/China/HeBei/1987)</name>
    <name type="common">HEV</name>
    <dbReference type="NCBI Taxonomy" id="652674"/>
    <lineage>
        <taxon>Viruses</taxon>
        <taxon>Riboviria</taxon>
        <taxon>Orthornavirae</taxon>
        <taxon>Kitrinoviricota</taxon>
        <taxon>Alsuviricetes</taxon>
        <taxon>Hepelivirales</taxon>
        <taxon>Hepeviridae</taxon>
        <taxon>Orthohepevirinae</taxon>
        <taxon>Paslahepevirus</taxon>
        <taxon>Hepatitis E virus</taxon>
    </lineage>
</organism>
<sequence>MEAHQFIKAPGITTAIEQAALAAANSALANAVVVRPFLSHQQIEILINLMQPRQLVFRPEVFWNHPIQRVIHNELELYCRARSGRCLEIGAHPRSINDNPNVVHRCFLRPAGRDVQRWYTAPTRGPAANCRRSALRGLPAADRTYCFDGFSGCNFPAETGVALYSLHDMSPSDVAEAMFRHGMTRLYAALHLPPEVLLPPGTYRTASYLLIHDGRRVVVTYEGDTSAGYNHDVSNLRSWIRTTKVTGDHPLVIERVRAIGCHFVLLLTAAPEPSPTPYVPYPRSTEVYVRSIFGPGGTPSLFPTSCSTKSTFHAVPAHIWDRLMLFGATLDDQAFCCSRLMTYLRGISYKVTVGTLVANEGWNASEVALTAVITAAYLTICHQRYLRTQAISKGMRRLEREHAQKFITRLYSWLFEKSGRDYIPGRQLEFYAQCRRWLSAGFHLDPRVLVFDESAPCHCRTAIRKAVSKFCCFMKWLGQECTCFLQPAEGAVGDQGHDNEAYEGSDVDPAESAISDISGSYVVPGTALQPLYQALDLPAEIVARAGRLTATVKVSQVDGRIDCETLLGNKTFRTSFVDGAVLETNGPERHNLSFDASQSTMAAGPFSLTYAASAAGLEVRYVAAGLDHRAVFAPGVSPRSAPGEVTAFCSALYRFNREAQRLSLTGNFWFHPEGLLGPFAPFSPGHVWESANPFCGESTLYTRTWSEVDAVSSPAQPDLGFISEPSIPSRAATLTPAAPLPPPAPDPSPTPSAPARGEPAPGATARAPAITHQAARHRRLLFTYPDGSKVFAGSLFESTCTWLVNASNVDHRPGGGLCHAFYQRYPASFDAASFVMRDGAAAYTLTPRPIIHAVAPDYRLEHNPKMLEAAYRETCSRLGTAAYPLLGTGIYQVPIGPSFDAWERNHRPGDELYLPELAARWFEANRPTCPTLTITEDVARTANLAIELDSATDVGRACAGCRVTPGVVQYQFTAGVPGSGKSRSITQADVDVVVVPTRELRNAWRRRGFAAFTPHTAARVTQGRRVVIDEAPSLPPHLLLLHMQRAATVHLLGDPNQIPAIDFEHAGLVPAIRPDLAPTSWWHVTHRCPADVCELIRGAYPMIQTTSRVLRSLFWGEPAVGQKLVFTQAAKAANPGSVTVHEAQGATYTETTIIATADARGLIQSSRAHAIVALTRHTEKCVIIDAPGLLREVGISDAIVNNFFLAGGEIGHQRPSVIPRGNPDANVDTLAAFPPSCQISAFHQLAEELGHRPAPVAAVLPPCPELEQGLLYLPQELTTCDSVVTFELTDIVHCRMAAPSQRKAVLSTLVGHYGRRTKLYNASHSDVRDSLARFIPAIGHVQVTTCELYELVEAMVEKGQDGSAVLELDLCNRDVSRITFFQKDCNKFTTGETIAHGKVGQGISAWSKTFCALFGPWFRAIEKAILALLPQGVFYGDAFDDTVFSAAVAAARASMVFENDFSEFDSTQNNFSLGLECAIMVECGMPQWLIRLYHLIRSAWILQAPKESLRGFWKKHSGEPGTLLWNTVWNMAVITHCYDFRDLQVAAFKGDDSIVLCSEYRQSPGAAVLIAGCGLKLKVDFRPIGLYAGVVVAPGLGALPDVVRFAGRLTEKNWGPGPERAKQLRLAVSDFLRKLTNVAQMCVDVVSRVYGVSPGLVHNLIGMLQAVADGKAHFTESVKPVLDLTNSILCRVE</sequence>